<proteinExistence type="inferred from homology"/>
<protein>
    <recommendedName>
        <fullName evidence="1">DNA repair protein RecO</fullName>
    </recommendedName>
    <alternativeName>
        <fullName evidence="1">Recombination protein O</fullName>
    </alternativeName>
</protein>
<gene>
    <name evidence="1" type="primary">recO</name>
    <name type="ordered locus">Nham_2248</name>
</gene>
<name>RECO_NITHX</name>
<dbReference type="EMBL" id="CP000319">
    <property type="protein sequence ID" value="ABE63040.1"/>
    <property type="molecule type" value="Genomic_DNA"/>
</dbReference>
<dbReference type="RefSeq" id="WP_011510717.1">
    <property type="nucleotide sequence ID" value="NC_007964.1"/>
</dbReference>
<dbReference type="SMR" id="Q1QL57"/>
<dbReference type="STRING" id="323097.Nham_2248"/>
<dbReference type="KEGG" id="nha:Nham_2248"/>
<dbReference type="eggNOG" id="COG1381">
    <property type="taxonomic scope" value="Bacteria"/>
</dbReference>
<dbReference type="HOGENOM" id="CLU_086029_0_0_5"/>
<dbReference type="OrthoDB" id="9804792at2"/>
<dbReference type="Proteomes" id="UP000001953">
    <property type="component" value="Chromosome"/>
</dbReference>
<dbReference type="GO" id="GO:0043590">
    <property type="term" value="C:bacterial nucleoid"/>
    <property type="evidence" value="ECO:0007669"/>
    <property type="project" value="TreeGrafter"/>
</dbReference>
<dbReference type="GO" id="GO:0006310">
    <property type="term" value="P:DNA recombination"/>
    <property type="evidence" value="ECO:0007669"/>
    <property type="project" value="UniProtKB-UniRule"/>
</dbReference>
<dbReference type="GO" id="GO:0006302">
    <property type="term" value="P:double-strand break repair"/>
    <property type="evidence" value="ECO:0007669"/>
    <property type="project" value="TreeGrafter"/>
</dbReference>
<dbReference type="Gene3D" id="2.40.50.140">
    <property type="entry name" value="Nucleic acid-binding proteins"/>
    <property type="match status" value="1"/>
</dbReference>
<dbReference type="Gene3D" id="1.20.1440.120">
    <property type="entry name" value="Recombination protein O, C-terminal domain"/>
    <property type="match status" value="1"/>
</dbReference>
<dbReference type="HAMAP" id="MF_00201">
    <property type="entry name" value="RecO"/>
    <property type="match status" value="1"/>
</dbReference>
<dbReference type="InterPro" id="IPR037278">
    <property type="entry name" value="ARFGAP/RecO"/>
</dbReference>
<dbReference type="InterPro" id="IPR022572">
    <property type="entry name" value="DNA_rep/recomb_RecO_N"/>
</dbReference>
<dbReference type="InterPro" id="IPR012340">
    <property type="entry name" value="NA-bd_OB-fold"/>
</dbReference>
<dbReference type="InterPro" id="IPR003717">
    <property type="entry name" value="RecO"/>
</dbReference>
<dbReference type="InterPro" id="IPR042242">
    <property type="entry name" value="RecO_C"/>
</dbReference>
<dbReference type="NCBIfam" id="TIGR00613">
    <property type="entry name" value="reco"/>
    <property type="match status" value="1"/>
</dbReference>
<dbReference type="PANTHER" id="PTHR33991">
    <property type="entry name" value="DNA REPAIR PROTEIN RECO"/>
    <property type="match status" value="1"/>
</dbReference>
<dbReference type="PANTHER" id="PTHR33991:SF1">
    <property type="entry name" value="DNA REPAIR PROTEIN RECO"/>
    <property type="match status" value="1"/>
</dbReference>
<dbReference type="Pfam" id="PF02565">
    <property type="entry name" value="RecO_C"/>
    <property type="match status" value="1"/>
</dbReference>
<dbReference type="Pfam" id="PF11967">
    <property type="entry name" value="RecO_N"/>
    <property type="match status" value="1"/>
</dbReference>
<dbReference type="SUPFAM" id="SSF57863">
    <property type="entry name" value="ArfGap/RecO-like zinc finger"/>
    <property type="match status" value="1"/>
</dbReference>
<dbReference type="SUPFAM" id="SSF50249">
    <property type="entry name" value="Nucleic acid-binding proteins"/>
    <property type="match status" value="1"/>
</dbReference>
<comment type="function">
    <text evidence="1">Involved in DNA repair and RecF pathway recombination.</text>
</comment>
<comment type="similarity">
    <text evidence="1">Belongs to the RecO family.</text>
</comment>
<reference key="1">
    <citation type="submission" date="2006-03" db="EMBL/GenBank/DDBJ databases">
        <title>Complete sequence of chromosome of Nitrobacter hamburgensis X14.</title>
        <authorList>
            <consortium name="US DOE Joint Genome Institute"/>
            <person name="Copeland A."/>
            <person name="Lucas S."/>
            <person name="Lapidus A."/>
            <person name="Barry K."/>
            <person name="Detter J.C."/>
            <person name="Glavina del Rio T."/>
            <person name="Hammon N."/>
            <person name="Israni S."/>
            <person name="Dalin E."/>
            <person name="Tice H."/>
            <person name="Pitluck S."/>
            <person name="Chain P."/>
            <person name="Malfatti S."/>
            <person name="Shin M."/>
            <person name="Vergez L."/>
            <person name="Schmutz J."/>
            <person name="Larimer F."/>
            <person name="Land M."/>
            <person name="Hauser L."/>
            <person name="Kyrpides N."/>
            <person name="Ivanova N."/>
            <person name="Ward B."/>
            <person name="Arp D."/>
            <person name="Klotz M."/>
            <person name="Stein L."/>
            <person name="O'Mullan G."/>
            <person name="Starkenburg S."/>
            <person name="Sayavedra L."/>
            <person name="Poret-Peterson A.T."/>
            <person name="Gentry M.E."/>
            <person name="Bruce D."/>
            <person name="Richardson P."/>
        </authorList>
    </citation>
    <scope>NUCLEOTIDE SEQUENCE [LARGE SCALE GENOMIC DNA]</scope>
    <source>
        <strain>DSM 10229 / NCIMB 13809 / X14</strain>
    </source>
</reference>
<accession>Q1QL57</accession>
<organism>
    <name type="scientific">Nitrobacter hamburgensis (strain DSM 10229 / NCIMB 13809 / X14)</name>
    <dbReference type="NCBI Taxonomy" id="323097"/>
    <lineage>
        <taxon>Bacteria</taxon>
        <taxon>Pseudomonadati</taxon>
        <taxon>Pseudomonadota</taxon>
        <taxon>Alphaproteobacteria</taxon>
        <taxon>Hyphomicrobiales</taxon>
        <taxon>Nitrobacteraceae</taxon>
        <taxon>Nitrobacter</taxon>
    </lineage>
</organism>
<keyword id="KW-0227">DNA damage</keyword>
<keyword id="KW-0233">DNA recombination</keyword>
<keyword id="KW-0234">DNA repair</keyword>
<keyword id="KW-1185">Reference proteome</keyword>
<evidence type="ECO:0000255" key="1">
    <source>
        <dbReference type="HAMAP-Rule" id="MF_00201"/>
    </source>
</evidence>
<sequence>MEWTDDGIVLGVRRHGESSAIVELLTRGHGRHLGLVRGGAGSRMRPLLQPGNSVSALWRARLDEHLGAYALEGTRMRAANLLGASHATYGVTHLASLARLLPERDPHDGIFERLERTLDDFDTAGEAAIHLIRFELAMLTELGFGLDLSTCVATGTTTELIYVSPKSGGAVSRQAGEPWRDRLLRLPPFLREADEEQSGWSDQDLLDGFELTGRFLLRHVLEPRGQGHSDARAGFINAVVKHQARASAAAISG</sequence>
<feature type="chain" id="PRO_0000264826" description="DNA repair protein RecO">
    <location>
        <begin position="1"/>
        <end position="253"/>
    </location>
</feature>